<accession>Q33369</accession>
<name>RBL_CORKO</name>
<feature type="chain" id="PRO_0000062419" description="Ribulose bisphosphate carboxylase large chain">
    <location>
        <begin position="1" status="less than"/>
        <end position="466"/>
    </location>
</feature>
<feature type="active site" description="Proton acceptor" evidence="1">
    <location>
        <position position="166"/>
    </location>
</feature>
<feature type="active site" description="Proton acceptor" evidence="1">
    <location>
        <position position="285"/>
    </location>
</feature>
<feature type="binding site" description="in homodimeric partner" evidence="1">
    <location>
        <position position="114"/>
    </location>
    <ligand>
        <name>substrate</name>
    </ligand>
</feature>
<feature type="binding site" evidence="1">
    <location>
        <position position="164"/>
    </location>
    <ligand>
        <name>substrate</name>
    </ligand>
</feature>
<feature type="binding site" evidence="1">
    <location>
        <position position="168"/>
    </location>
    <ligand>
        <name>substrate</name>
    </ligand>
</feature>
<feature type="binding site" description="via carbamate group" evidence="1">
    <location>
        <position position="192"/>
    </location>
    <ligand>
        <name>Mg(2+)</name>
        <dbReference type="ChEBI" id="CHEBI:18420"/>
    </ligand>
</feature>
<feature type="binding site" evidence="1">
    <location>
        <position position="194"/>
    </location>
    <ligand>
        <name>Mg(2+)</name>
        <dbReference type="ChEBI" id="CHEBI:18420"/>
    </ligand>
</feature>
<feature type="binding site" evidence="1">
    <location>
        <position position="195"/>
    </location>
    <ligand>
        <name>Mg(2+)</name>
        <dbReference type="ChEBI" id="CHEBI:18420"/>
    </ligand>
</feature>
<feature type="binding site" evidence="1">
    <location>
        <position position="286"/>
    </location>
    <ligand>
        <name>substrate</name>
    </ligand>
</feature>
<feature type="binding site" evidence="1">
    <location>
        <position position="318"/>
    </location>
    <ligand>
        <name>substrate</name>
    </ligand>
</feature>
<feature type="binding site" evidence="1">
    <location>
        <position position="370"/>
    </location>
    <ligand>
        <name>substrate</name>
    </ligand>
</feature>
<feature type="site" description="Transition state stabilizer" evidence="1">
    <location>
        <position position="325"/>
    </location>
</feature>
<feature type="modified residue" description="N6,N6,N6-trimethyllysine" evidence="1">
    <location>
        <position position="5"/>
    </location>
</feature>
<feature type="modified residue" description="N6-carboxylysine" evidence="1">
    <location>
        <position position="192"/>
    </location>
</feature>
<feature type="non-terminal residue">
    <location>
        <position position="1"/>
    </location>
</feature>
<sequence length="466" mass="51922">SVGFKAGVKEYKLTYYTPTYETKDTDILAAFRVTPQPGVPPEEAGAAVAXESSTGTWTTVWTDGLTSLDRYKGRCYHIEPVAGEENQFIAYVAYPLDLFEEGSVTNMFTSIVGNVFGFKALRALRLEDLRIPVAYVKTFQGPPHXIQVERDKLNKYGRPLLXCTIKPKLGLSAKNYGRAVYECPRGXXDFTKDDENVNSQPFMRWRDRFLFCAEAXYEAQTETGEIKGHYLNATAGTNEEMMKRAVFARELGVPIVMHDYLTGGFTANTSLAHYCRDNGLLLHIHRAMHAVIDRQKNHGIHFRVLAKALRMSGGDHIHSGTVVGKLEGERDITLGFVDLLRDGFIEKDRSRGIYFTQDWVXLPGVLPVASGGIHVXHMPALTEIFGDDSVLQFGGGTLGHPWXXRPGAVANRVALEACVQARNEGRDLAXEGNEIIREASKWSPELAAACEVWKEIKFEFEAMDTL</sequence>
<protein>
    <recommendedName>
        <fullName evidence="1">Ribulose bisphosphate carboxylase large chain</fullName>
        <shortName evidence="1">RuBisCO large subunit</shortName>
        <ecNumber evidence="1">4.1.1.39</ecNumber>
    </recommendedName>
</protein>
<evidence type="ECO:0000255" key="1">
    <source>
        <dbReference type="HAMAP-Rule" id="MF_01338"/>
    </source>
</evidence>
<comment type="function">
    <text evidence="1">RuBisCO catalyzes two reactions: the carboxylation of D-ribulose 1,5-bisphosphate, the primary event in carbon dioxide fixation, as well as the oxidative fragmentation of the pentose substrate in the photorespiration process. Both reactions occur simultaneously and in competition at the same active site.</text>
</comment>
<comment type="catalytic activity">
    <reaction evidence="1">
        <text>2 (2R)-3-phosphoglycerate + 2 H(+) = D-ribulose 1,5-bisphosphate + CO2 + H2O</text>
        <dbReference type="Rhea" id="RHEA:23124"/>
        <dbReference type="ChEBI" id="CHEBI:15377"/>
        <dbReference type="ChEBI" id="CHEBI:15378"/>
        <dbReference type="ChEBI" id="CHEBI:16526"/>
        <dbReference type="ChEBI" id="CHEBI:57870"/>
        <dbReference type="ChEBI" id="CHEBI:58272"/>
        <dbReference type="EC" id="4.1.1.39"/>
    </reaction>
</comment>
<comment type="catalytic activity">
    <reaction evidence="1">
        <text>D-ribulose 1,5-bisphosphate + O2 = 2-phosphoglycolate + (2R)-3-phosphoglycerate + 2 H(+)</text>
        <dbReference type="Rhea" id="RHEA:36631"/>
        <dbReference type="ChEBI" id="CHEBI:15378"/>
        <dbReference type="ChEBI" id="CHEBI:15379"/>
        <dbReference type="ChEBI" id="CHEBI:57870"/>
        <dbReference type="ChEBI" id="CHEBI:58033"/>
        <dbReference type="ChEBI" id="CHEBI:58272"/>
    </reaction>
</comment>
<comment type="cofactor">
    <cofactor evidence="1">
        <name>Mg(2+)</name>
        <dbReference type="ChEBI" id="CHEBI:18420"/>
    </cofactor>
    <text evidence="1">Binds 1 Mg(2+) ion per subunit.</text>
</comment>
<comment type="subunit">
    <text evidence="1">Heterohexadecamer of 8 large chains and 8 small chains.</text>
</comment>
<comment type="subcellular location">
    <subcellularLocation>
        <location>Plastid</location>
        <location>Chloroplast</location>
    </subcellularLocation>
</comment>
<comment type="miscellaneous">
    <text evidence="1">The basic functional RuBisCO is composed of a large chain homodimer in a 'head-to-tail' conformation. In form I RuBisCO this homodimer is arranged in a barrel-like tetramer with the small subunits forming a tetrameric 'cap' on each end of the 'barrel'.</text>
</comment>
<comment type="similarity">
    <text evidence="1">Belongs to the RuBisCO large chain family. Type I subfamily.</text>
</comment>
<gene>
    <name evidence="1" type="primary">rbcL</name>
</gene>
<keyword id="KW-0113">Calvin cycle</keyword>
<keyword id="KW-0120">Carbon dioxide fixation</keyword>
<keyword id="KW-0150">Chloroplast</keyword>
<keyword id="KW-0456">Lyase</keyword>
<keyword id="KW-0460">Magnesium</keyword>
<keyword id="KW-0479">Metal-binding</keyword>
<keyword id="KW-0488">Methylation</keyword>
<keyword id="KW-0503">Monooxygenase</keyword>
<keyword id="KW-0560">Oxidoreductase</keyword>
<keyword id="KW-0601">Photorespiration</keyword>
<keyword id="KW-0602">Photosynthesis</keyword>
<keyword id="KW-0934">Plastid</keyword>
<reference key="1">
    <citation type="journal article" date="1993" name="Ann. Mo. Bot. Gard.">
        <title>A parsimony analysis of the Asteridae sensu lato based on rbcL sequences.</title>
        <authorList>
            <person name="Olmstead R.G."/>
            <person name="Bremer B."/>
            <person name="Scott K.M."/>
            <person name="Palmer J.D."/>
        </authorList>
        <dbReference type="AGRICOLA" id="IND93053816"/>
    </citation>
    <scope>NUCLEOTIDE SEQUENCE [GENOMIC DNA]</scope>
    <source>
        <tissue>Leaf</tissue>
    </source>
</reference>
<geneLocation type="chloroplast"/>
<dbReference type="EC" id="4.1.1.39" evidence="1"/>
<dbReference type="EMBL" id="L14395">
    <property type="protein sequence ID" value="AAA19755.1"/>
    <property type="molecule type" value="Genomic_DNA"/>
</dbReference>
<dbReference type="GO" id="GO:0009507">
    <property type="term" value="C:chloroplast"/>
    <property type="evidence" value="ECO:0007669"/>
    <property type="project" value="UniProtKB-SubCell"/>
</dbReference>
<dbReference type="GO" id="GO:0000287">
    <property type="term" value="F:magnesium ion binding"/>
    <property type="evidence" value="ECO:0007669"/>
    <property type="project" value="InterPro"/>
</dbReference>
<dbReference type="GO" id="GO:0004497">
    <property type="term" value="F:monooxygenase activity"/>
    <property type="evidence" value="ECO:0007669"/>
    <property type="project" value="UniProtKB-KW"/>
</dbReference>
<dbReference type="GO" id="GO:0016984">
    <property type="term" value="F:ribulose-bisphosphate carboxylase activity"/>
    <property type="evidence" value="ECO:0007669"/>
    <property type="project" value="UniProtKB-EC"/>
</dbReference>
<dbReference type="GO" id="GO:0009853">
    <property type="term" value="P:photorespiration"/>
    <property type="evidence" value="ECO:0007669"/>
    <property type="project" value="UniProtKB-KW"/>
</dbReference>
<dbReference type="GO" id="GO:0019253">
    <property type="term" value="P:reductive pentose-phosphate cycle"/>
    <property type="evidence" value="ECO:0007669"/>
    <property type="project" value="UniProtKB-KW"/>
</dbReference>
<dbReference type="CDD" id="cd08212">
    <property type="entry name" value="RuBisCO_large_I"/>
    <property type="match status" value="1"/>
</dbReference>
<dbReference type="FunFam" id="3.20.20.110:FF:000001">
    <property type="entry name" value="Ribulose bisphosphate carboxylase large chain"/>
    <property type="match status" value="1"/>
</dbReference>
<dbReference type="FunFam" id="3.30.70.150:FF:000001">
    <property type="entry name" value="Ribulose bisphosphate carboxylase large chain"/>
    <property type="match status" value="1"/>
</dbReference>
<dbReference type="Gene3D" id="3.20.20.110">
    <property type="entry name" value="Ribulose bisphosphate carboxylase, large subunit, C-terminal domain"/>
    <property type="match status" value="1"/>
</dbReference>
<dbReference type="Gene3D" id="3.30.70.150">
    <property type="entry name" value="RuBisCO large subunit, N-terminal domain"/>
    <property type="match status" value="1"/>
</dbReference>
<dbReference type="HAMAP" id="MF_01338">
    <property type="entry name" value="RuBisCO_L_type1"/>
    <property type="match status" value="1"/>
</dbReference>
<dbReference type="InterPro" id="IPR033966">
    <property type="entry name" value="RuBisCO"/>
</dbReference>
<dbReference type="InterPro" id="IPR000685">
    <property type="entry name" value="RuBisCO_lsu_C"/>
</dbReference>
<dbReference type="InterPro" id="IPR036376">
    <property type="entry name" value="RuBisCO_lsu_C_sf"/>
</dbReference>
<dbReference type="InterPro" id="IPR017443">
    <property type="entry name" value="RuBisCO_lsu_fd_N"/>
</dbReference>
<dbReference type="InterPro" id="IPR036422">
    <property type="entry name" value="RuBisCO_lsu_N_sf"/>
</dbReference>
<dbReference type="InterPro" id="IPR020888">
    <property type="entry name" value="RuBisCO_lsuI"/>
</dbReference>
<dbReference type="NCBIfam" id="NF003252">
    <property type="entry name" value="PRK04208.1"/>
    <property type="match status" value="1"/>
</dbReference>
<dbReference type="PANTHER" id="PTHR42704">
    <property type="entry name" value="RIBULOSE BISPHOSPHATE CARBOXYLASE"/>
    <property type="match status" value="1"/>
</dbReference>
<dbReference type="PANTHER" id="PTHR42704:SF15">
    <property type="entry name" value="RIBULOSE BISPHOSPHATE CARBOXYLASE LARGE CHAIN"/>
    <property type="match status" value="1"/>
</dbReference>
<dbReference type="Pfam" id="PF00016">
    <property type="entry name" value="RuBisCO_large"/>
    <property type="match status" value="1"/>
</dbReference>
<dbReference type="Pfam" id="PF02788">
    <property type="entry name" value="RuBisCO_large_N"/>
    <property type="match status" value="1"/>
</dbReference>
<dbReference type="SFLD" id="SFLDG01052">
    <property type="entry name" value="RuBisCO"/>
    <property type="match status" value="1"/>
</dbReference>
<dbReference type="SFLD" id="SFLDS00014">
    <property type="entry name" value="RuBisCO"/>
    <property type="match status" value="1"/>
</dbReference>
<dbReference type="SFLD" id="SFLDG00301">
    <property type="entry name" value="RuBisCO-like_proteins"/>
    <property type="match status" value="1"/>
</dbReference>
<dbReference type="SUPFAM" id="SSF51649">
    <property type="entry name" value="RuBisCo, C-terminal domain"/>
    <property type="match status" value="1"/>
</dbReference>
<dbReference type="SUPFAM" id="SSF54966">
    <property type="entry name" value="RuBisCO, large subunit, small (N-terminal) domain"/>
    <property type="match status" value="1"/>
</dbReference>
<dbReference type="PROSITE" id="PS00157">
    <property type="entry name" value="RUBISCO_LARGE"/>
    <property type="match status" value="1"/>
</dbReference>
<proteinExistence type="inferred from homology"/>
<organism>
    <name type="scientific">Cornus kousa</name>
    <name type="common">Kousa dogwood</name>
    <name type="synonym">Benthamidia kousa</name>
    <dbReference type="NCBI Taxonomy" id="28501"/>
    <lineage>
        <taxon>Eukaryota</taxon>
        <taxon>Viridiplantae</taxon>
        <taxon>Streptophyta</taxon>
        <taxon>Embryophyta</taxon>
        <taxon>Tracheophyta</taxon>
        <taxon>Spermatophyta</taxon>
        <taxon>Magnoliopsida</taxon>
        <taxon>eudicotyledons</taxon>
        <taxon>Gunneridae</taxon>
        <taxon>Pentapetalae</taxon>
        <taxon>asterids</taxon>
        <taxon>Cornales</taxon>
        <taxon>Cornaceae</taxon>
        <taxon>Cornus</taxon>
    </lineage>
</organism>